<feature type="chain" id="PRO_0000154042" description="Exonuclease 1">
    <location>
        <begin position="1"/>
        <end position="734"/>
    </location>
</feature>
<feature type="region of interest" description="N-domain">
    <location>
        <begin position="1"/>
        <end position="99"/>
    </location>
</feature>
<feature type="region of interest" description="I-domain">
    <location>
        <begin position="138"/>
        <end position="229"/>
    </location>
</feature>
<feature type="region of interest" description="Disordered" evidence="2">
    <location>
        <begin position="599"/>
        <end position="650"/>
    </location>
</feature>
<feature type="region of interest" description="Disordered" evidence="2">
    <location>
        <begin position="656"/>
        <end position="675"/>
    </location>
</feature>
<feature type="region of interest" description="Disordered" evidence="2">
    <location>
        <begin position="685"/>
        <end position="716"/>
    </location>
</feature>
<feature type="compositionally biased region" description="Polar residues" evidence="2">
    <location>
        <begin position="604"/>
        <end position="620"/>
    </location>
</feature>
<feature type="compositionally biased region" description="Basic and acidic residues" evidence="2">
    <location>
        <begin position="621"/>
        <end position="641"/>
    </location>
</feature>
<feature type="compositionally biased region" description="Polar residues" evidence="2">
    <location>
        <begin position="700"/>
        <end position="715"/>
    </location>
</feature>
<feature type="binding site" evidence="1">
    <location>
        <position position="30"/>
    </location>
    <ligand>
        <name>Mg(2+)</name>
        <dbReference type="ChEBI" id="CHEBI:18420"/>
        <label>1</label>
    </ligand>
</feature>
<feature type="binding site" evidence="1">
    <location>
        <position position="78"/>
    </location>
    <ligand>
        <name>Mg(2+)</name>
        <dbReference type="ChEBI" id="CHEBI:18420"/>
        <label>1</label>
    </ligand>
</feature>
<feature type="binding site" evidence="1">
    <location>
        <position position="150"/>
    </location>
    <ligand>
        <name>Mg(2+)</name>
        <dbReference type="ChEBI" id="CHEBI:18420"/>
        <label>1</label>
    </ligand>
</feature>
<feature type="binding site" evidence="1">
    <location>
        <position position="152"/>
    </location>
    <ligand>
        <name>Mg(2+)</name>
        <dbReference type="ChEBI" id="CHEBI:18420"/>
        <label>1</label>
    </ligand>
</feature>
<feature type="binding site" evidence="1">
    <location>
        <position position="171"/>
    </location>
    <ligand>
        <name>Mg(2+)</name>
        <dbReference type="ChEBI" id="CHEBI:18420"/>
        <label>2</label>
    </ligand>
</feature>
<feature type="binding site" evidence="1">
    <location>
        <position position="173"/>
    </location>
    <ligand>
        <name>Mg(2+)</name>
        <dbReference type="ChEBI" id="CHEBI:18420"/>
        <label>2</label>
    </ligand>
</feature>
<feature type="binding site" evidence="1">
    <location>
        <position position="225"/>
    </location>
    <ligand>
        <name>Mg(2+)</name>
        <dbReference type="ChEBI" id="CHEBI:18420"/>
        <label>2</label>
    </ligand>
</feature>
<feature type="sequence conflict" description="In Ref. 2; AAH84102." evidence="3" ref="2">
    <original>P</original>
    <variation>A</variation>
    <location>
        <position position="604"/>
    </location>
</feature>
<dbReference type="EC" id="3.1.-.-"/>
<dbReference type="EMBL" id="AF134570">
    <property type="protein sequence ID" value="AAD31867.1"/>
    <property type="molecule type" value="mRNA"/>
</dbReference>
<dbReference type="EMBL" id="BC084102">
    <property type="protein sequence ID" value="AAH84102.1"/>
    <property type="molecule type" value="mRNA"/>
</dbReference>
<dbReference type="RefSeq" id="NP_001083827.1">
    <property type="nucleotide sequence ID" value="NM_001090358.1"/>
</dbReference>
<dbReference type="SMR" id="Q9W6K2"/>
<dbReference type="DNASU" id="399140"/>
<dbReference type="GeneID" id="399140"/>
<dbReference type="KEGG" id="xla:399140"/>
<dbReference type="AGR" id="Xenbase:XB-GENE-982081"/>
<dbReference type="CTD" id="399140"/>
<dbReference type="Xenbase" id="XB-GENE-982081">
    <property type="gene designation" value="exo1.S"/>
</dbReference>
<dbReference type="OMA" id="AFCMKLV"/>
<dbReference type="OrthoDB" id="26491at2759"/>
<dbReference type="Proteomes" id="UP000186698">
    <property type="component" value="Chromosome 8S"/>
</dbReference>
<dbReference type="Bgee" id="399140">
    <property type="expression patterns" value="Expressed in egg cell and 15 other cell types or tissues"/>
</dbReference>
<dbReference type="GO" id="GO:0005634">
    <property type="term" value="C:nucleus"/>
    <property type="evidence" value="ECO:0000250"/>
    <property type="project" value="UniProtKB"/>
</dbReference>
<dbReference type="GO" id="GO:0035312">
    <property type="term" value="F:5'-3' DNA exonuclease activity"/>
    <property type="evidence" value="ECO:0000318"/>
    <property type="project" value="GO_Central"/>
</dbReference>
<dbReference type="GO" id="GO:0017108">
    <property type="term" value="F:5'-flap endonuclease activity"/>
    <property type="evidence" value="ECO:0000318"/>
    <property type="project" value="GO_Central"/>
</dbReference>
<dbReference type="GO" id="GO:0003677">
    <property type="term" value="F:DNA binding"/>
    <property type="evidence" value="ECO:0007669"/>
    <property type="project" value="UniProtKB-KW"/>
</dbReference>
<dbReference type="GO" id="GO:0048256">
    <property type="term" value="F:flap endonuclease activity"/>
    <property type="evidence" value="ECO:0000250"/>
    <property type="project" value="UniProtKB"/>
</dbReference>
<dbReference type="GO" id="GO:0046872">
    <property type="term" value="F:metal ion binding"/>
    <property type="evidence" value="ECO:0007669"/>
    <property type="project" value="UniProtKB-KW"/>
</dbReference>
<dbReference type="GO" id="GO:0045145">
    <property type="term" value="F:single-stranded DNA 5'-3' DNA exonuclease activity"/>
    <property type="evidence" value="ECO:0000250"/>
    <property type="project" value="UniProtKB"/>
</dbReference>
<dbReference type="GO" id="GO:0006310">
    <property type="term" value="P:DNA recombination"/>
    <property type="evidence" value="ECO:0000250"/>
    <property type="project" value="UniProtKB"/>
</dbReference>
<dbReference type="GO" id="GO:0006298">
    <property type="term" value="P:mismatch repair"/>
    <property type="evidence" value="ECO:0000250"/>
    <property type="project" value="UniProtKB"/>
</dbReference>
<dbReference type="CDD" id="cd09908">
    <property type="entry name" value="H3TH_EXO1"/>
    <property type="match status" value="1"/>
</dbReference>
<dbReference type="CDD" id="cd09857">
    <property type="entry name" value="PIN_EXO1"/>
    <property type="match status" value="1"/>
</dbReference>
<dbReference type="FunFam" id="3.40.50.1010:FF:000096">
    <property type="entry name" value="Exonuclease 1"/>
    <property type="match status" value="1"/>
</dbReference>
<dbReference type="FunFam" id="1.10.150.20:FF:000011">
    <property type="entry name" value="exonuclease 1"/>
    <property type="match status" value="1"/>
</dbReference>
<dbReference type="Gene3D" id="1.10.150.20">
    <property type="entry name" value="5' to 3' exonuclease, C-terminal subdomain"/>
    <property type="match status" value="1"/>
</dbReference>
<dbReference type="Gene3D" id="3.40.50.1010">
    <property type="entry name" value="5'-nuclease"/>
    <property type="match status" value="1"/>
</dbReference>
<dbReference type="InterPro" id="IPR036279">
    <property type="entry name" value="5-3_exonuclease_C_sf"/>
</dbReference>
<dbReference type="InterPro" id="IPR037315">
    <property type="entry name" value="EXO1_H3TH"/>
</dbReference>
<dbReference type="InterPro" id="IPR008918">
    <property type="entry name" value="HhH2"/>
</dbReference>
<dbReference type="InterPro" id="IPR029060">
    <property type="entry name" value="PIN-like_dom_sf"/>
</dbReference>
<dbReference type="InterPro" id="IPR044752">
    <property type="entry name" value="PIN-like_EXO1"/>
</dbReference>
<dbReference type="InterPro" id="IPR006086">
    <property type="entry name" value="XPG-I_dom"/>
</dbReference>
<dbReference type="InterPro" id="IPR006084">
    <property type="entry name" value="XPG/Rad2"/>
</dbReference>
<dbReference type="InterPro" id="IPR019974">
    <property type="entry name" value="XPG_CS"/>
</dbReference>
<dbReference type="InterPro" id="IPR006085">
    <property type="entry name" value="XPG_DNA_repair_N"/>
</dbReference>
<dbReference type="PANTHER" id="PTHR11081:SF8">
    <property type="entry name" value="EXONUCLEASE 1"/>
    <property type="match status" value="1"/>
</dbReference>
<dbReference type="PANTHER" id="PTHR11081">
    <property type="entry name" value="FLAP ENDONUCLEASE FAMILY MEMBER"/>
    <property type="match status" value="1"/>
</dbReference>
<dbReference type="Pfam" id="PF00867">
    <property type="entry name" value="XPG_I"/>
    <property type="match status" value="1"/>
</dbReference>
<dbReference type="Pfam" id="PF00752">
    <property type="entry name" value="XPG_N"/>
    <property type="match status" value="1"/>
</dbReference>
<dbReference type="PRINTS" id="PR00853">
    <property type="entry name" value="XPGRADSUPER"/>
</dbReference>
<dbReference type="SMART" id="SM00279">
    <property type="entry name" value="HhH2"/>
    <property type="match status" value="1"/>
</dbReference>
<dbReference type="SMART" id="SM00484">
    <property type="entry name" value="XPGI"/>
    <property type="match status" value="1"/>
</dbReference>
<dbReference type="SMART" id="SM00485">
    <property type="entry name" value="XPGN"/>
    <property type="match status" value="1"/>
</dbReference>
<dbReference type="SUPFAM" id="SSF47807">
    <property type="entry name" value="5' to 3' exonuclease, C-terminal subdomain"/>
    <property type="match status" value="1"/>
</dbReference>
<dbReference type="SUPFAM" id="SSF88723">
    <property type="entry name" value="PIN domain-like"/>
    <property type="match status" value="1"/>
</dbReference>
<dbReference type="PROSITE" id="PS00841">
    <property type="entry name" value="XPG_1"/>
    <property type="match status" value="1"/>
</dbReference>
<dbReference type="PROSITE" id="PS00842">
    <property type="entry name" value="XPG_2"/>
    <property type="match status" value="1"/>
</dbReference>
<reference key="1">
    <citation type="submission" date="1999-03" db="EMBL/GenBank/DDBJ databases">
        <title>Xenopus laevis homolog of ExoI.</title>
        <authorList>
            <person name="Bibikova M."/>
            <person name="Carroll D."/>
        </authorList>
    </citation>
    <scope>NUCLEOTIDE SEQUENCE [MRNA]</scope>
</reference>
<reference key="2">
    <citation type="submission" date="2004-10" db="EMBL/GenBank/DDBJ databases">
        <authorList>
            <consortium name="NIH - Xenopus Gene Collection (XGC) project"/>
        </authorList>
    </citation>
    <scope>NUCLEOTIDE SEQUENCE [LARGE SCALE MRNA]</scope>
    <source>
        <tissue>Oocyte</tissue>
    </source>
</reference>
<proteinExistence type="evidence at transcript level"/>
<evidence type="ECO:0000250" key="1"/>
<evidence type="ECO:0000256" key="2">
    <source>
        <dbReference type="SAM" id="MobiDB-lite"/>
    </source>
</evidence>
<evidence type="ECO:0000305" key="3"/>
<keyword id="KW-0227">DNA damage</keyword>
<keyword id="KW-0228">DNA excision</keyword>
<keyword id="KW-0234">DNA repair</keyword>
<keyword id="KW-0238">DNA-binding</keyword>
<keyword id="KW-0255">Endonuclease</keyword>
<keyword id="KW-0267">Excision nuclease</keyword>
<keyword id="KW-0269">Exonuclease</keyword>
<keyword id="KW-0378">Hydrolase</keyword>
<keyword id="KW-0460">Magnesium</keyword>
<keyword id="KW-0479">Metal-binding</keyword>
<keyword id="KW-0540">Nuclease</keyword>
<keyword id="KW-0539">Nucleus</keyword>
<keyword id="KW-1185">Reference proteome</keyword>
<organism>
    <name type="scientific">Xenopus laevis</name>
    <name type="common">African clawed frog</name>
    <dbReference type="NCBI Taxonomy" id="8355"/>
    <lineage>
        <taxon>Eukaryota</taxon>
        <taxon>Metazoa</taxon>
        <taxon>Chordata</taxon>
        <taxon>Craniata</taxon>
        <taxon>Vertebrata</taxon>
        <taxon>Euteleostomi</taxon>
        <taxon>Amphibia</taxon>
        <taxon>Batrachia</taxon>
        <taxon>Anura</taxon>
        <taxon>Pipoidea</taxon>
        <taxon>Pipidae</taxon>
        <taxon>Xenopodinae</taxon>
        <taxon>Xenopus</taxon>
        <taxon>Xenopus</taxon>
    </lineage>
</organism>
<sequence length="734" mass="82232">MGIQGLLQFLKEASEPVHVKKYKGKTVAVDTYCWLHKGAFACAEKLAKGEPTDQYVQFCMKLVHMLLSFGVKPILVFDGCTLPSKKDVEKARREKRQTNLQKGKQLLREGKLAEARECFSRSVNITSSMAHEVIKAARSEGVDYIVAPYEADSQLAYLNKNDFAEAIITEDSDLLAFGCKKVLLKMDKFGNGLEIDQARFGMCRSLGDVFTEEKFRYMCILSGCDYLPSIHGIGLAKACKLLKVANNPDITKVIQKIGQYLKTNITVPEGYIEGFLRANNTFLYQLVFDPVERKLIPLNPYGNDVNPEELNYAGPNMGDSVALQIALGNMDINTRKQIDDYNPDIPQLSHHRSQSWDNKQLNRKTAHTDSIWYTKSEPCKTTKIEEIHSPRGLILPSKKHTVKRSYEDGVSDTDLISQYSFSKNKKARPDGDDPMQQVPASTMILQPLDDCANTKPKKPIHQPKTRNAFATFLQRQKQDCSSVSATGTRSRFFYKPADEKPHCTEKEQIVCNGSALDIAKETHELTEESSIKTEKEDSLSTISEVCKPNNQRISPLQNQRSCFTWSGSLDSESSPTPKQSPMLLSLQKFHRTTPYMQNEAENKPSWQSSCIKSDTVSQIDSNEKLLKKQDIEDTDSDEHASTPESPCQFTMKASPAHQSFFPEPKGSAPKSKVPGLLKSQSVVSGLRTKVKPRAPAKVSGLTNRSNTKATRNNENVPGLQATIGDLWKNFSYKK</sequence>
<protein>
    <recommendedName>
        <fullName>Exonuclease 1</fullName>
        <ecNumber>3.1.-.-</ecNumber>
    </recommendedName>
    <alternativeName>
        <fullName>Exonuclease I</fullName>
    </alternativeName>
</protein>
<name>EXO1_XENLA</name>
<accession>Q9W6K2</accession>
<accession>Q5XHF5</accession>
<gene>
    <name type="primary">exo1</name>
    <name type="synonym">exoi</name>
</gene>
<comment type="function">
    <text evidence="1">5'-&gt;3' double-stranded DNA exonuclease which may also contain a cryptic 3'-&gt;5' double-stranded DNA exonuclease activity. Also exhibits endonuclease activity against 5'-overhanging flap structures similar to those generated by displacement synthesis when DNA polymerase encounters the 5'-end of a downstream Okazaki fragment. Required for DNA mismatch repair (MMR) (By similarity).</text>
</comment>
<comment type="cofactor">
    <cofactor evidence="1">
        <name>Mg(2+)</name>
        <dbReference type="ChEBI" id="CHEBI:18420"/>
    </cofactor>
    <text evidence="1">Binds 2 magnesium ions per subunit. They probably participate in the reaction catalyzed by the enzyme. May bind an additional third magnesium ion after substrate binding.</text>
</comment>
<comment type="subcellular location">
    <subcellularLocation>
        <location evidence="1">Nucleus</location>
    </subcellularLocation>
</comment>
<comment type="similarity">
    <text evidence="3">Belongs to the XPG/RAD2 endonuclease family. EXO1 subfamily.</text>
</comment>